<organism>
    <name type="scientific">Sulfolobus acidocaldarius (strain ATCC 33909 / DSM 639 / JCM 8929 / NBRC 15157 / NCIMB 11770)</name>
    <dbReference type="NCBI Taxonomy" id="330779"/>
    <lineage>
        <taxon>Archaea</taxon>
        <taxon>Thermoproteota</taxon>
        <taxon>Thermoprotei</taxon>
        <taxon>Sulfolobales</taxon>
        <taxon>Sulfolobaceae</taxon>
        <taxon>Sulfolobus</taxon>
    </lineage>
</organism>
<reference key="1">
    <citation type="journal article" date="2005" name="J. Bacteriol.">
        <title>The genome of Sulfolobus acidocaldarius, a model organism of the Crenarchaeota.</title>
        <authorList>
            <person name="Chen L."/>
            <person name="Bruegger K."/>
            <person name="Skovgaard M."/>
            <person name="Redder P."/>
            <person name="She Q."/>
            <person name="Torarinsson E."/>
            <person name="Greve B."/>
            <person name="Awayez M."/>
            <person name="Zibat A."/>
            <person name="Klenk H.-P."/>
            <person name="Garrett R.A."/>
        </authorList>
    </citation>
    <scope>NUCLEOTIDE SEQUENCE [LARGE SCALE GENOMIC DNA]</scope>
    <source>
        <strain>ATCC 33909 / DSM 639 / JCM 8929 / NBRC 15157 / NCIMB 11770</strain>
    </source>
</reference>
<reference key="2">
    <citation type="journal article" date="2013" name="Nat. Chem. Biol.">
        <title>Lysine and arginine biosyntheses mediated by a common carrier protein in Sulfolobus.</title>
        <authorList>
            <person name="Ouchi T."/>
            <person name="Tomita T."/>
            <person name="Horie A."/>
            <person name="Yoshida A."/>
            <person name="Takahashi K."/>
            <person name="Nishida H."/>
            <person name="Lassak K."/>
            <person name="Taka H."/>
            <person name="Mineki R."/>
            <person name="Fujimura T."/>
            <person name="Kosono S."/>
            <person name="Nishiyama C."/>
            <person name="Masui R."/>
            <person name="Kuramitsu S."/>
            <person name="Albers S.V."/>
            <person name="Kuzuyama T."/>
            <person name="Nishiyama M."/>
        </authorList>
    </citation>
    <scope>CATALYTIC ACTIVITY</scope>
    <scope>FUNCTION</scope>
    <scope>DISRUPTION PHENOTYPE</scope>
    <scope>MUTAGENESIS OF 253-ASN-THR-254</scope>
</reference>
<protein>
    <recommendedName>
        <fullName>Alpha-aminoadipate--LysW ligase LysX</fullName>
        <shortName>AAA--LysW ligase LysX</shortName>
        <ecNumber evidence="3">6.3.2.43</ecNumber>
    </recommendedName>
</protein>
<sequence>MRWEEKDIITEAKKSGFKAIPIFTKDFYSAIGVGENYSELEADVIIQRNTSHARALTTSLIFEGWNYNVVNDATSLFKCGNKLYTLSLLAKHNIKTPRTIVTFSKDKAVDLAKKIGFPAVIKPIEGSWGRMVAKAVDEDILYSFLEYQEYTTSQFRQIYLVQEFVKKPNRDIRIFVMGDEAPVGIYRVNERNWKTNTALGARALPLKIDDELRDLALKVRDIMGGFFLGIDIFEDPERGYLVNEVNGVPEYKNTVRVNNFNVSSYLLNKLREWIKK</sequence>
<evidence type="ECO:0000250" key="1"/>
<evidence type="ECO:0000255" key="2">
    <source>
        <dbReference type="PROSITE-ProRule" id="PRU00409"/>
    </source>
</evidence>
<evidence type="ECO:0000269" key="3">
    <source>
    </source>
</evidence>
<evidence type="ECO:0000305" key="4"/>
<gene>
    <name type="primary">lysX</name>
    <name type="ordered locus">Saci_0754</name>
</gene>
<name>LYSX_SULAC</name>
<dbReference type="EC" id="6.3.2.43" evidence="3"/>
<dbReference type="EMBL" id="CP000077">
    <property type="protein sequence ID" value="AAY80130.1"/>
    <property type="molecule type" value="Genomic_DNA"/>
</dbReference>
<dbReference type="SMR" id="Q4JAP9"/>
<dbReference type="STRING" id="330779.Saci_0754"/>
<dbReference type="KEGG" id="sai:Saci_0754"/>
<dbReference type="PATRIC" id="fig|330779.12.peg.723"/>
<dbReference type="eggNOG" id="arCOG01589">
    <property type="taxonomic scope" value="Archaea"/>
</dbReference>
<dbReference type="HOGENOM" id="CLU_054353_2_1_2"/>
<dbReference type="BRENDA" id="6.3.2.43">
    <property type="organism ID" value="6160"/>
</dbReference>
<dbReference type="UniPathway" id="UPA00033">
    <property type="reaction ID" value="UER00035"/>
</dbReference>
<dbReference type="Proteomes" id="UP000001018">
    <property type="component" value="Chromosome"/>
</dbReference>
<dbReference type="GO" id="GO:0005737">
    <property type="term" value="C:cytoplasm"/>
    <property type="evidence" value="ECO:0007669"/>
    <property type="project" value="TreeGrafter"/>
</dbReference>
<dbReference type="GO" id="GO:0005524">
    <property type="term" value="F:ATP binding"/>
    <property type="evidence" value="ECO:0007669"/>
    <property type="project" value="UniProtKB-KW"/>
</dbReference>
<dbReference type="GO" id="GO:0043774">
    <property type="term" value="F:coenzyme F420-2 alpha-glutamyl ligase activity"/>
    <property type="evidence" value="ECO:0007669"/>
    <property type="project" value="TreeGrafter"/>
</dbReference>
<dbReference type="GO" id="GO:0046872">
    <property type="term" value="F:metal ion binding"/>
    <property type="evidence" value="ECO:0007669"/>
    <property type="project" value="UniProtKB-KW"/>
</dbReference>
<dbReference type="GO" id="GO:0019878">
    <property type="term" value="P:lysine biosynthetic process via aminoadipic acid"/>
    <property type="evidence" value="ECO:0007669"/>
    <property type="project" value="UniProtKB-UniPathway"/>
</dbReference>
<dbReference type="GO" id="GO:0036211">
    <property type="term" value="P:protein modification process"/>
    <property type="evidence" value="ECO:0007669"/>
    <property type="project" value="InterPro"/>
</dbReference>
<dbReference type="FunFam" id="3.30.1490.20:FF:000025">
    <property type="entry name" value="Alpha-aminoadipate--LysW ligase LysX protein"/>
    <property type="match status" value="1"/>
</dbReference>
<dbReference type="FunFam" id="3.30.470.20:FF:000058">
    <property type="entry name" value="Alpha-aminoadipate--LysW ligase LysX protein"/>
    <property type="match status" value="1"/>
</dbReference>
<dbReference type="Gene3D" id="3.40.50.20">
    <property type="match status" value="1"/>
</dbReference>
<dbReference type="Gene3D" id="3.30.1490.20">
    <property type="entry name" value="ATP-grasp fold, A domain"/>
    <property type="match status" value="1"/>
</dbReference>
<dbReference type="Gene3D" id="3.30.470.20">
    <property type="entry name" value="ATP-grasp fold, B domain"/>
    <property type="match status" value="1"/>
</dbReference>
<dbReference type="InterPro" id="IPR011761">
    <property type="entry name" value="ATP-grasp"/>
</dbReference>
<dbReference type="InterPro" id="IPR013651">
    <property type="entry name" value="ATP-grasp_RimK-type"/>
</dbReference>
<dbReference type="InterPro" id="IPR013815">
    <property type="entry name" value="ATP_grasp_subdomain_1"/>
</dbReference>
<dbReference type="InterPro" id="IPR011870">
    <property type="entry name" value="LysX_arch"/>
</dbReference>
<dbReference type="InterPro" id="IPR016185">
    <property type="entry name" value="PreATP-grasp_dom_sf"/>
</dbReference>
<dbReference type="InterPro" id="IPR004666">
    <property type="entry name" value="Rp_bS6_RimK/Lys_biosynth_LsyX"/>
</dbReference>
<dbReference type="NCBIfam" id="TIGR02144">
    <property type="entry name" value="LysX_arch"/>
    <property type="match status" value="1"/>
</dbReference>
<dbReference type="NCBIfam" id="TIGR00768">
    <property type="entry name" value="rimK_fam"/>
    <property type="match status" value="1"/>
</dbReference>
<dbReference type="PANTHER" id="PTHR21621:SF2">
    <property type="entry name" value="COENZYME GAMMA-F420-2:ALPHA-L-GLUTAMATE LIGASE"/>
    <property type="match status" value="1"/>
</dbReference>
<dbReference type="PANTHER" id="PTHR21621">
    <property type="entry name" value="RIBOSOMAL PROTEIN S6 MODIFICATION PROTEIN"/>
    <property type="match status" value="1"/>
</dbReference>
<dbReference type="Pfam" id="PF08443">
    <property type="entry name" value="RimK"/>
    <property type="match status" value="1"/>
</dbReference>
<dbReference type="SUPFAM" id="SSF56059">
    <property type="entry name" value="Glutathione synthetase ATP-binding domain-like"/>
    <property type="match status" value="1"/>
</dbReference>
<dbReference type="SUPFAM" id="SSF52440">
    <property type="entry name" value="PreATP-grasp domain"/>
    <property type="match status" value="1"/>
</dbReference>
<dbReference type="PROSITE" id="PS50975">
    <property type="entry name" value="ATP_GRASP"/>
    <property type="match status" value="1"/>
</dbReference>
<feature type="chain" id="PRO_0000422992" description="Alpha-aminoadipate--LysW ligase LysX">
    <location>
        <begin position="1"/>
        <end position="276"/>
    </location>
</feature>
<feature type="domain" description="ATP-grasp" evidence="2">
    <location>
        <begin position="86"/>
        <end position="271"/>
    </location>
</feature>
<feature type="short sequence motif" description="N-[TS] motif that is essential for LysX substrate specificity">
    <location>
        <begin position="253"/>
        <end position="254"/>
    </location>
</feature>
<feature type="binding site" evidence="1">
    <location>
        <position position="82"/>
    </location>
    <ligand>
        <name>ATP</name>
        <dbReference type="ChEBI" id="CHEBI:30616"/>
    </ligand>
</feature>
<feature type="binding site" evidence="1">
    <location>
        <position position="122"/>
    </location>
    <ligand>
        <name>ATP</name>
        <dbReference type="ChEBI" id="CHEBI:30616"/>
    </ligand>
</feature>
<feature type="binding site" evidence="2">
    <location>
        <begin position="126"/>
        <end position="132"/>
    </location>
    <ligand>
        <name>ATP</name>
        <dbReference type="ChEBI" id="CHEBI:30616"/>
    </ligand>
</feature>
<feature type="binding site" evidence="2">
    <location>
        <begin position="162"/>
        <end position="173"/>
    </location>
    <ligand>
        <name>ATP</name>
        <dbReference type="ChEBI" id="CHEBI:30616"/>
    </ligand>
</feature>
<feature type="binding site" evidence="1">
    <location>
        <position position="187"/>
    </location>
    <ligand>
        <name>ATP</name>
        <dbReference type="ChEBI" id="CHEBI:30616"/>
    </ligand>
</feature>
<feature type="binding site" evidence="1">
    <location>
        <position position="196"/>
    </location>
    <ligand>
        <name>ATP</name>
        <dbReference type="ChEBI" id="CHEBI:30616"/>
    </ligand>
</feature>
<feature type="binding site" evidence="1">
    <location>
        <position position="231"/>
    </location>
    <ligand>
        <name>Mg(2+)</name>
        <dbReference type="ChEBI" id="CHEBI:18420"/>
        <label>1</label>
    </ligand>
</feature>
<feature type="binding site" evidence="1">
    <location>
        <position position="244"/>
    </location>
    <ligand>
        <name>Mg(2+)</name>
        <dbReference type="ChEBI" id="CHEBI:18420"/>
        <label>1</label>
    </ligand>
</feature>
<feature type="binding site" evidence="1">
    <location>
        <position position="244"/>
    </location>
    <ligand>
        <name>Mg(2+)</name>
        <dbReference type="ChEBI" id="CHEBI:18420"/>
        <label>2</label>
    </ligand>
</feature>
<feature type="binding site" evidence="1">
    <location>
        <position position="246"/>
    </location>
    <ligand>
        <name>Mg(2+)</name>
        <dbReference type="ChEBI" id="CHEBI:18420"/>
        <label>2</label>
    </ligand>
</feature>
<feature type="mutagenesis site" description="Alters substrate specificity, so that glutamate is preferred over alpha-aminoadipate." evidence="3">
    <original>NT</original>
    <variation>GF</variation>
    <location>
        <begin position="253"/>
        <end position="254"/>
    </location>
</feature>
<accession>Q4JAP9</accession>
<keyword id="KW-0028">Amino-acid biosynthesis</keyword>
<keyword id="KW-0067">ATP-binding</keyword>
<keyword id="KW-0436">Ligase</keyword>
<keyword id="KW-0457">Lysine biosynthesis</keyword>
<keyword id="KW-0460">Magnesium</keyword>
<keyword id="KW-0479">Metal-binding</keyword>
<keyword id="KW-0547">Nucleotide-binding</keyword>
<keyword id="KW-1185">Reference proteome</keyword>
<comment type="function">
    <text evidence="3">Catalyzes the ATP-dependent formation of a covalent bond between the amino group of alpha-aminoadipate (AAA) and the gamma-carboxyl group of the C-terminal glutamate residue in LysW.</text>
</comment>
<comment type="catalytic activity">
    <reaction evidence="3">
        <text>[amino-group carrier protein]-C-terminal-L-glutamate + L-2-aminoadipate + ATP = [amino-group carrier protein]-C-terminal-N-(1,4-dicarboxybutan-1-yl)-L-glutamine + ADP + phosphate + H(+)</text>
        <dbReference type="Rhea" id="RHEA:41940"/>
        <dbReference type="Rhea" id="RHEA-COMP:9693"/>
        <dbReference type="Rhea" id="RHEA-COMP:9694"/>
        <dbReference type="ChEBI" id="CHEBI:15378"/>
        <dbReference type="ChEBI" id="CHEBI:30616"/>
        <dbReference type="ChEBI" id="CHEBI:43474"/>
        <dbReference type="ChEBI" id="CHEBI:58672"/>
        <dbReference type="ChEBI" id="CHEBI:78503"/>
        <dbReference type="ChEBI" id="CHEBI:78525"/>
        <dbReference type="ChEBI" id="CHEBI:456216"/>
        <dbReference type="EC" id="6.3.2.43"/>
    </reaction>
</comment>
<comment type="cofactor">
    <cofactor evidence="1">
        <name>Mg(2+)</name>
        <dbReference type="ChEBI" id="CHEBI:18420"/>
    </cofactor>
    <text evidence="1">Binds 2 magnesium ions per subunit.</text>
</comment>
<comment type="pathway">
    <text>Amino-acid biosynthesis; L-lysine biosynthesis via AAA pathway; L-lysine from L-alpha-aminoadipate (Thermus route): step 1/5.</text>
</comment>
<comment type="subunit">
    <text evidence="1">Homodimer.</text>
</comment>
<comment type="disruption phenotype">
    <text evidence="3">Cells lacking this gene require lysine for growth.</text>
</comment>
<comment type="similarity">
    <text evidence="4">Belongs to the RimK family. LysX subfamily.</text>
</comment>
<proteinExistence type="evidence at protein level"/>